<comment type="function">
    <text>Involved in the viral transport within, and between cells.</text>
</comment>
<comment type="subunit">
    <text evidence="1">Interacts with the capsid protein (CP). Part of a MP-CP-viral DNA complex (By similarity).</text>
</comment>
<comment type="subcellular location">
    <subcellularLocation>
        <location evidence="4">Host membrane</location>
        <topology evidence="4">Single-pass membrane protein</topology>
    </subcellularLocation>
</comment>
<comment type="similarity">
    <text evidence="4">Belongs to the mastrevirus movement protein family.</text>
</comment>
<proteinExistence type="inferred from homology"/>
<organismHost>
    <name type="scientific">Megathyrsus maximus</name>
    <dbReference type="NCBI Taxonomy" id="59788"/>
</organismHost>
<organism>
    <name type="scientific">Panicum streak virus (isolate Kenya)</name>
    <name type="common">PanSV</name>
    <dbReference type="NCBI Taxonomy" id="268780"/>
    <lineage>
        <taxon>Viruses</taxon>
        <taxon>Monodnaviria</taxon>
        <taxon>Shotokuvirae</taxon>
        <taxon>Cressdnaviricota</taxon>
        <taxon>Repensiviricetes</taxon>
        <taxon>Geplafuvirales</taxon>
        <taxon>Geminiviridae</taxon>
        <taxon>Mastrevirus</taxon>
        <taxon>Panicum streak virus</taxon>
    </lineage>
</organism>
<sequence>MDASSQYSALPYPQPPRVPSAAPSAGRLPWSRVGEIVIFTFVSVLALYLLWLWVLKDCILLLKAQRGRSTEELIFGPGERPPVASADGSRPVPDPSPPVRRDLDLSRV</sequence>
<feature type="chain" id="PRO_0000222294" description="Movement protein">
    <location>
        <begin position="1"/>
        <end position="108"/>
    </location>
</feature>
<feature type="transmembrane region" description="Helical" evidence="2">
    <location>
        <begin position="35"/>
        <end position="55"/>
    </location>
</feature>
<feature type="region of interest" description="Disordered" evidence="3">
    <location>
        <begin position="1"/>
        <end position="25"/>
    </location>
</feature>
<feature type="region of interest" description="Disordered" evidence="3">
    <location>
        <begin position="73"/>
        <end position="108"/>
    </location>
</feature>
<feature type="compositionally biased region" description="Basic and acidic residues" evidence="3">
    <location>
        <begin position="99"/>
        <end position="108"/>
    </location>
</feature>
<protein>
    <recommendedName>
        <fullName>Movement protein</fullName>
        <shortName>MP</shortName>
    </recommendedName>
</protein>
<name>MP_PASVK</name>
<dbReference type="EMBL" id="X60168">
    <property type="protein sequence ID" value="CAA42733.1"/>
    <property type="molecule type" value="Genomic_DNA"/>
</dbReference>
<dbReference type="PIR" id="JQ1549">
    <property type="entry name" value="JQ1549"/>
</dbReference>
<dbReference type="Proteomes" id="UP000007896">
    <property type="component" value="Genome"/>
</dbReference>
<dbReference type="GO" id="GO:0033644">
    <property type="term" value="C:host cell membrane"/>
    <property type="evidence" value="ECO:0007669"/>
    <property type="project" value="UniProtKB-SubCell"/>
</dbReference>
<dbReference type="GO" id="GO:0016020">
    <property type="term" value="C:membrane"/>
    <property type="evidence" value="ECO:0007669"/>
    <property type="project" value="UniProtKB-KW"/>
</dbReference>
<dbReference type="GO" id="GO:0046740">
    <property type="term" value="P:transport of virus in host, cell to cell"/>
    <property type="evidence" value="ECO:0007669"/>
    <property type="project" value="UniProtKB-KW"/>
</dbReference>
<dbReference type="InterPro" id="IPR002621">
    <property type="entry name" value="Gemini_mov"/>
</dbReference>
<dbReference type="Pfam" id="PF01708">
    <property type="entry name" value="Gemini_mov"/>
    <property type="match status" value="1"/>
</dbReference>
<gene>
    <name type="ORF">V2</name>
</gene>
<accession>Q00336</accession>
<reference key="1">
    <citation type="journal article" date="1992" name="J. Gen. Virol.">
        <title>The nucleotide sequence of an infectious insect-transmissible clone of the geminivirus Panicum streak virus.</title>
        <authorList>
            <person name="Briddon R.W."/>
            <person name="Lunness P."/>
            <person name="Chamberlain L.C."/>
            <person name="Brundish H."/>
            <person name="Pinner M.S."/>
            <person name="Markham P.G."/>
        </authorList>
    </citation>
    <scope>NUCLEOTIDE SEQUENCE [GENOMIC DNA]</scope>
</reference>
<evidence type="ECO:0000250" key="1"/>
<evidence type="ECO:0000255" key="2"/>
<evidence type="ECO:0000256" key="3">
    <source>
        <dbReference type="SAM" id="MobiDB-lite"/>
    </source>
</evidence>
<evidence type="ECO:0000305" key="4"/>
<keyword id="KW-1043">Host membrane</keyword>
<keyword id="KW-0472">Membrane</keyword>
<keyword id="KW-1185">Reference proteome</keyword>
<keyword id="KW-0812">Transmembrane</keyword>
<keyword id="KW-1133">Transmembrane helix</keyword>
<keyword id="KW-0813">Transport</keyword>
<keyword id="KW-0916">Viral movement protein</keyword>